<gene>
    <name evidence="1" type="primary">murA</name>
    <name type="ordered locus">Hore_17770</name>
</gene>
<accession>B8CZ07</accession>
<evidence type="ECO:0000255" key="1">
    <source>
        <dbReference type="HAMAP-Rule" id="MF_00111"/>
    </source>
</evidence>
<name>MURA_HALOH</name>
<reference key="1">
    <citation type="journal article" date="2009" name="PLoS ONE">
        <title>Genome analysis of the anaerobic thermohalophilic bacterium Halothermothrix orenii.</title>
        <authorList>
            <person name="Mavromatis K."/>
            <person name="Ivanova N."/>
            <person name="Anderson I."/>
            <person name="Lykidis A."/>
            <person name="Hooper S.D."/>
            <person name="Sun H."/>
            <person name="Kunin V."/>
            <person name="Lapidus A."/>
            <person name="Hugenholtz P."/>
            <person name="Patel B."/>
            <person name="Kyrpides N.C."/>
        </authorList>
    </citation>
    <scope>NUCLEOTIDE SEQUENCE [LARGE SCALE GENOMIC DNA]</scope>
    <source>
        <strain>H 168 / OCM 544 / DSM 9562</strain>
    </source>
</reference>
<protein>
    <recommendedName>
        <fullName evidence="1">UDP-N-acetylglucosamine 1-carboxyvinyltransferase</fullName>
        <ecNumber evidence="1">2.5.1.7</ecNumber>
    </recommendedName>
    <alternativeName>
        <fullName evidence="1">Enoylpyruvate transferase</fullName>
    </alternativeName>
    <alternativeName>
        <fullName evidence="1">UDP-N-acetylglucosamine enolpyruvyl transferase</fullName>
        <shortName evidence="1">EPT</shortName>
    </alternativeName>
</protein>
<feature type="chain" id="PRO_1000119116" description="UDP-N-acetylglucosamine 1-carboxyvinyltransferase">
    <location>
        <begin position="1"/>
        <end position="415"/>
    </location>
</feature>
<feature type="active site" description="Proton donor" evidence="1">
    <location>
        <position position="116"/>
    </location>
</feature>
<feature type="binding site" evidence="1">
    <location>
        <begin position="22"/>
        <end position="23"/>
    </location>
    <ligand>
        <name>phosphoenolpyruvate</name>
        <dbReference type="ChEBI" id="CHEBI:58702"/>
    </ligand>
</feature>
<feature type="binding site" evidence="1">
    <location>
        <position position="92"/>
    </location>
    <ligand>
        <name>UDP-N-acetyl-alpha-D-glucosamine</name>
        <dbReference type="ChEBI" id="CHEBI:57705"/>
    </ligand>
</feature>
<feature type="binding site" evidence="1">
    <location>
        <begin position="121"/>
        <end position="125"/>
    </location>
    <ligand>
        <name>UDP-N-acetyl-alpha-D-glucosamine</name>
        <dbReference type="ChEBI" id="CHEBI:57705"/>
    </ligand>
</feature>
<feature type="binding site" evidence="1">
    <location>
        <position position="304"/>
    </location>
    <ligand>
        <name>UDP-N-acetyl-alpha-D-glucosamine</name>
        <dbReference type="ChEBI" id="CHEBI:57705"/>
    </ligand>
</feature>
<feature type="binding site" evidence="1">
    <location>
        <position position="326"/>
    </location>
    <ligand>
        <name>UDP-N-acetyl-alpha-D-glucosamine</name>
        <dbReference type="ChEBI" id="CHEBI:57705"/>
    </ligand>
</feature>
<feature type="modified residue" description="2-(S-cysteinyl)pyruvic acid O-phosphothioketal" evidence="1">
    <location>
        <position position="116"/>
    </location>
</feature>
<keyword id="KW-0131">Cell cycle</keyword>
<keyword id="KW-0132">Cell division</keyword>
<keyword id="KW-0133">Cell shape</keyword>
<keyword id="KW-0961">Cell wall biogenesis/degradation</keyword>
<keyword id="KW-0963">Cytoplasm</keyword>
<keyword id="KW-0573">Peptidoglycan synthesis</keyword>
<keyword id="KW-0670">Pyruvate</keyword>
<keyword id="KW-1185">Reference proteome</keyword>
<keyword id="KW-0808">Transferase</keyword>
<proteinExistence type="inferred from homology"/>
<dbReference type="EC" id="2.5.1.7" evidence="1"/>
<dbReference type="EMBL" id="CP001098">
    <property type="protein sequence ID" value="ACL70526.1"/>
    <property type="molecule type" value="Genomic_DNA"/>
</dbReference>
<dbReference type="RefSeq" id="WP_015923496.1">
    <property type="nucleotide sequence ID" value="NC_011899.1"/>
</dbReference>
<dbReference type="SMR" id="B8CZ07"/>
<dbReference type="STRING" id="373903.Hore_17770"/>
<dbReference type="KEGG" id="hor:Hore_17770"/>
<dbReference type="eggNOG" id="COG0766">
    <property type="taxonomic scope" value="Bacteria"/>
</dbReference>
<dbReference type="HOGENOM" id="CLU_027387_0_0_9"/>
<dbReference type="OrthoDB" id="9803760at2"/>
<dbReference type="UniPathway" id="UPA00219"/>
<dbReference type="Proteomes" id="UP000000719">
    <property type="component" value="Chromosome"/>
</dbReference>
<dbReference type="GO" id="GO:0005737">
    <property type="term" value="C:cytoplasm"/>
    <property type="evidence" value="ECO:0007669"/>
    <property type="project" value="UniProtKB-SubCell"/>
</dbReference>
<dbReference type="GO" id="GO:0008760">
    <property type="term" value="F:UDP-N-acetylglucosamine 1-carboxyvinyltransferase activity"/>
    <property type="evidence" value="ECO:0007669"/>
    <property type="project" value="UniProtKB-UniRule"/>
</dbReference>
<dbReference type="GO" id="GO:0051301">
    <property type="term" value="P:cell division"/>
    <property type="evidence" value="ECO:0007669"/>
    <property type="project" value="UniProtKB-KW"/>
</dbReference>
<dbReference type="GO" id="GO:0071555">
    <property type="term" value="P:cell wall organization"/>
    <property type="evidence" value="ECO:0007669"/>
    <property type="project" value="UniProtKB-KW"/>
</dbReference>
<dbReference type="GO" id="GO:0009252">
    <property type="term" value="P:peptidoglycan biosynthetic process"/>
    <property type="evidence" value="ECO:0007669"/>
    <property type="project" value="UniProtKB-UniRule"/>
</dbReference>
<dbReference type="GO" id="GO:0008360">
    <property type="term" value="P:regulation of cell shape"/>
    <property type="evidence" value="ECO:0007669"/>
    <property type="project" value="UniProtKB-KW"/>
</dbReference>
<dbReference type="GO" id="GO:0019277">
    <property type="term" value="P:UDP-N-acetylgalactosamine biosynthetic process"/>
    <property type="evidence" value="ECO:0007669"/>
    <property type="project" value="InterPro"/>
</dbReference>
<dbReference type="CDD" id="cd01555">
    <property type="entry name" value="UdpNAET"/>
    <property type="match status" value="1"/>
</dbReference>
<dbReference type="FunFam" id="3.65.10.10:FF:000001">
    <property type="entry name" value="UDP-N-acetylglucosamine 1-carboxyvinyltransferase"/>
    <property type="match status" value="1"/>
</dbReference>
<dbReference type="Gene3D" id="3.65.10.10">
    <property type="entry name" value="Enolpyruvate transferase domain"/>
    <property type="match status" value="2"/>
</dbReference>
<dbReference type="HAMAP" id="MF_00111">
    <property type="entry name" value="MurA"/>
    <property type="match status" value="1"/>
</dbReference>
<dbReference type="InterPro" id="IPR001986">
    <property type="entry name" value="Enolpyruvate_Tfrase_dom"/>
</dbReference>
<dbReference type="InterPro" id="IPR036968">
    <property type="entry name" value="Enolpyruvate_Tfrase_sf"/>
</dbReference>
<dbReference type="InterPro" id="IPR050068">
    <property type="entry name" value="MurA_subfamily"/>
</dbReference>
<dbReference type="InterPro" id="IPR013792">
    <property type="entry name" value="RNA3'P_cycl/enolpyr_Trfase_a/b"/>
</dbReference>
<dbReference type="InterPro" id="IPR005750">
    <property type="entry name" value="UDP_GlcNAc_COvinyl_MurA"/>
</dbReference>
<dbReference type="NCBIfam" id="TIGR01072">
    <property type="entry name" value="murA"/>
    <property type="match status" value="1"/>
</dbReference>
<dbReference type="NCBIfam" id="NF006873">
    <property type="entry name" value="PRK09369.1"/>
    <property type="match status" value="1"/>
</dbReference>
<dbReference type="NCBIfam" id="NF009470">
    <property type="entry name" value="PRK12830.1"/>
    <property type="match status" value="1"/>
</dbReference>
<dbReference type="PANTHER" id="PTHR43783">
    <property type="entry name" value="UDP-N-ACETYLGLUCOSAMINE 1-CARBOXYVINYLTRANSFERASE"/>
    <property type="match status" value="1"/>
</dbReference>
<dbReference type="PANTHER" id="PTHR43783:SF1">
    <property type="entry name" value="UDP-N-ACETYLGLUCOSAMINE 1-CARBOXYVINYLTRANSFERASE"/>
    <property type="match status" value="1"/>
</dbReference>
<dbReference type="Pfam" id="PF00275">
    <property type="entry name" value="EPSP_synthase"/>
    <property type="match status" value="1"/>
</dbReference>
<dbReference type="SUPFAM" id="SSF55205">
    <property type="entry name" value="EPT/RTPC-like"/>
    <property type="match status" value="1"/>
</dbReference>
<organism>
    <name type="scientific">Halothermothrix orenii (strain H 168 / OCM 544 / DSM 9562)</name>
    <dbReference type="NCBI Taxonomy" id="373903"/>
    <lineage>
        <taxon>Bacteria</taxon>
        <taxon>Bacillati</taxon>
        <taxon>Bacillota</taxon>
        <taxon>Clostridia</taxon>
        <taxon>Halanaerobiales</taxon>
        <taxon>Halothermotrichaceae</taxon>
        <taxon>Halothermothrix</taxon>
    </lineage>
</organism>
<comment type="function">
    <text evidence="1">Cell wall formation. Adds enolpyruvyl to UDP-N-acetylglucosamine.</text>
</comment>
<comment type="catalytic activity">
    <reaction evidence="1">
        <text>phosphoenolpyruvate + UDP-N-acetyl-alpha-D-glucosamine = UDP-N-acetyl-3-O-(1-carboxyvinyl)-alpha-D-glucosamine + phosphate</text>
        <dbReference type="Rhea" id="RHEA:18681"/>
        <dbReference type="ChEBI" id="CHEBI:43474"/>
        <dbReference type="ChEBI" id="CHEBI:57705"/>
        <dbReference type="ChEBI" id="CHEBI:58702"/>
        <dbReference type="ChEBI" id="CHEBI:68483"/>
        <dbReference type="EC" id="2.5.1.7"/>
    </reaction>
</comment>
<comment type="pathway">
    <text evidence="1">Cell wall biogenesis; peptidoglycan biosynthesis.</text>
</comment>
<comment type="subcellular location">
    <subcellularLocation>
        <location evidence="1">Cytoplasm</location>
    </subcellularLocation>
</comment>
<comment type="similarity">
    <text evidence="1">Belongs to the EPSP synthase family. MurA subfamily.</text>
</comment>
<sequence length="415" mass="44624">MGKFLIKGGNPLKGKIKVSGAKNAALPIITAALLADTPSKLIDIPHLRDVTNLCNILEKMGAGVEFENNIVSIDPTTLTEAEADPELARKLRASYYILGVLLAKEGWARTSLPGGCNIGNRPIDLHLKGFKALGADVKLDHGIVEVKANKLKGARIYLDYPSVGATINIMLAATRAEGKTVIENAAREPEIVDLANYLTVMGAKIKGVGTDIIKIEGVDSLKGAEHRIIPDRIEAGTYMIAAALNKGDVFVDNVLAEHLKSLIAKLKEMGIQIKEEISGIKVVSNDKLKAVDVKTLPYPGFPTDLQSQIMVLLTQAEGTSLVIETVWENRFMHVDELKRMGADIKIDGHSALIKPSQLTGAEVTATDLRAGAALILAGLVAEGETEVRNINHVERGYEDIEEKLSGIGADIRKVK</sequence>